<protein>
    <recommendedName>
        <fullName evidence="1">Large ribosomal subunit protein bL21</fullName>
    </recommendedName>
    <alternativeName>
        <fullName evidence="2">50S ribosomal protein L21</fullName>
    </alternativeName>
</protein>
<evidence type="ECO:0000255" key="1">
    <source>
        <dbReference type="HAMAP-Rule" id="MF_01363"/>
    </source>
</evidence>
<evidence type="ECO:0000305" key="2"/>
<dbReference type="EMBL" id="AE014133">
    <property type="protein sequence ID" value="AAN58563.1"/>
    <property type="molecule type" value="Genomic_DNA"/>
</dbReference>
<dbReference type="RefSeq" id="NP_721257.1">
    <property type="nucleotide sequence ID" value="NC_004350.2"/>
</dbReference>
<dbReference type="RefSeq" id="WP_002261996.1">
    <property type="nucleotide sequence ID" value="NC_004350.2"/>
</dbReference>
<dbReference type="SMR" id="Q8DUQ6"/>
<dbReference type="STRING" id="210007.SMU_846"/>
<dbReference type="GeneID" id="93859623"/>
<dbReference type="KEGG" id="smu:SMU_846"/>
<dbReference type="PATRIC" id="fig|210007.7.peg.753"/>
<dbReference type="eggNOG" id="COG0261">
    <property type="taxonomic scope" value="Bacteria"/>
</dbReference>
<dbReference type="HOGENOM" id="CLU_061463_3_1_9"/>
<dbReference type="OrthoDB" id="9813334at2"/>
<dbReference type="PhylomeDB" id="Q8DUQ6"/>
<dbReference type="Proteomes" id="UP000002512">
    <property type="component" value="Chromosome"/>
</dbReference>
<dbReference type="GO" id="GO:0005737">
    <property type="term" value="C:cytoplasm"/>
    <property type="evidence" value="ECO:0007669"/>
    <property type="project" value="UniProtKB-ARBA"/>
</dbReference>
<dbReference type="GO" id="GO:1990904">
    <property type="term" value="C:ribonucleoprotein complex"/>
    <property type="evidence" value="ECO:0007669"/>
    <property type="project" value="UniProtKB-KW"/>
</dbReference>
<dbReference type="GO" id="GO:0005840">
    <property type="term" value="C:ribosome"/>
    <property type="evidence" value="ECO:0007669"/>
    <property type="project" value="UniProtKB-KW"/>
</dbReference>
<dbReference type="GO" id="GO:0019843">
    <property type="term" value="F:rRNA binding"/>
    <property type="evidence" value="ECO:0007669"/>
    <property type="project" value="UniProtKB-UniRule"/>
</dbReference>
<dbReference type="GO" id="GO:0003735">
    <property type="term" value="F:structural constituent of ribosome"/>
    <property type="evidence" value="ECO:0007669"/>
    <property type="project" value="InterPro"/>
</dbReference>
<dbReference type="GO" id="GO:0006412">
    <property type="term" value="P:translation"/>
    <property type="evidence" value="ECO:0007669"/>
    <property type="project" value="UniProtKB-UniRule"/>
</dbReference>
<dbReference type="HAMAP" id="MF_01363">
    <property type="entry name" value="Ribosomal_bL21"/>
    <property type="match status" value="1"/>
</dbReference>
<dbReference type="InterPro" id="IPR028909">
    <property type="entry name" value="bL21-like"/>
</dbReference>
<dbReference type="InterPro" id="IPR036164">
    <property type="entry name" value="bL21-like_sf"/>
</dbReference>
<dbReference type="InterPro" id="IPR001787">
    <property type="entry name" value="Ribosomal_bL21"/>
</dbReference>
<dbReference type="InterPro" id="IPR018258">
    <property type="entry name" value="Ribosomal_bL21_CS"/>
</dbReference>
<dbReference type="NCBIfam" id="TIGR00061">
    <property type="entry name" value="L21"/>
    <property type="match status" value="1"/>
</dbReference>
<dbReference type="PANTHER" id="PTHR21349">
    <property type="entry name" value="50S RIBOSOMAL PROTEIN L21"/>
    <property type="match status" value="1"/>
</dbReference>
<dbReference type="PANTHER" id="PTHR21349:SF0">
    <property type="entry name" value="LARGE RIBOSOMAL SUBUNIT PROTEIN BL21M"/>
    <property type="match status" value="1"/>
</dbReference>
<dbReference type="Pfam" id="PF00829">
    <property type="entry name" value="Ribosomal_L21p"/>
    <property type="match status" value="1"/>
</dbReference>
<dbReference type="SUPFAM" id="SSF141091">
    <property type="entry name" value="L21p-like"/>
    <property type="match status" value="1"/>
</dbReference>
<dbReference type="PROSITE" id="PS01169">
    <property type="entry name" value="RIBOSOMAL_L21"/>
    <property type="match status" value="1"/>
</dbReference>
<comment type="function">
    <text evidence="1">This protein binds to 23S rRNA in the presence of protein L20.</text>
</comment>
<comment type="subunit">
    <text evidence="1">Part of the 50S ribosomal subunit. Contacts protein L20.</text>
</comment>
<comment type="similarity">
    <text evidence="1">Belongs to the bacterial ribosomal protein bL21 family.</text>
</comment>
<organism>
    <name type="scientific">Streptococcus mutans serotype c (strain ATCC 700610 / UA159)</name>
    <dbReference type="NCBI Taxonomy" id="210007"/>
    <lineage>
        <taxon>Bacteria</taxon>
        <taxon>Bacillati</taxon>
        <taxon>Bacillota</taxon>
        <taxon>Bacilli</taxon>
        <taxon>Lactobacillales</taxon>
        <taxon>Streptococcaceae</taxon>
        <taxon>Streptococcus</taxon>
    </lineage>
</organism>
<gene>
    <name evidence="1" type="primary">rplU</name>
    <name type="ordered locus">SMU_846</name>
</gene>
<keyword id="KW-1185">Reference proteome</keyword>
<keyword id="KW-0687">Ribonucleoprotein</keyword>
<keyword id="KW-0689">Ribosomal protein</keyword>
<keyword id="KW-0694">RNA-binding</keyword>
<keyword id="KW-0699">rRNA-binding</keyword>
<proteinExistence type="inferred from homology"/>
<reference key="1">
    <citation type="journal article" date="2002" name="Proc. Natl. Acad. Sci. U.S.A.">
        <title>Genome sequence of Streptococcus mutans UA159, a cariogenic dental pathogen.</title>
        <authorList>
            <person name="Ajdic D.J."/>
            <person name="McShan W.M."/>
            <person name="McLaughlin R.E."/>
            <person name="Savic G."/>
            <person name="Chang J."/>
            <person name="Carson M.B."/>
            <person name="Primeaux C."/>
            <person name="Tian R."/>
            <person name="Kenton S."/>
            <person name="Jia H.G."/>
            <person name="Lin S.P."/>
            <person name="Qian Y."/>
            <person name="Li S."/>
            <person name="Zhu H."/>
            <person name="Najar F.Z."/>
            <person name="Lai H."/>
            <person name="White J."/>
            <person name="Roe B.A."/>
            <person name="Ferretti J.J."/>
        </authorList>
    </citation>
    <scope>NUCLEOTIDE SEQUENCE [LARGE SCALE GENOMIC DNA]</scope>
    <source>
        <strain>ATCC 700610 / UA159</strain>
    </source>
</reference>
<feature type="chain" id="PRO_0000269390" description="Large ribosomal subunit protein bL21">
    <location>
        <begin position="1"/>
        <end position="104"/>
    </location>
</feature>
<accession>Q8DUQ6</accession>
<name>RL21_STRMU</name>
<sequence>MSTYAIIKTGGKQVKVEVDQAIYVEKLDVEAGAEVTFDQVVLVGGDKTVVGTPIVQGATVVGTVEKQGKQKKVVTYKYKPKKGSHRKQGHRQPYTKVVIKAINA</sequence>